<sequence length="202" mass="22305">MKALTARQQEVFDLIRDHISQTGMPPTRAEIAQRLGFRSPNAAEEHLKALARKGVLEIVSGASRGIRLLQEEEDGLPLVGRVAAGEPLLAQQHIEGHYQVDPSLFKPSADFLLRVSGMSMKDIGIMDGDLLAVHKTQDVRNGQVVVARIDDEVTVKRLKKQGNKVELLPENSEFTPIVVDLREQSFTIEGLAVGVIRNGEWL</sequence>
<proteinExistence type="inferred from homology"/>
<gene>
    <name evidence="1" type="primary">lexA</name>
    <name type="ordered locus">SARI_03441</name>
</gene>
<comment type="function">
    <text evidence="1">Represses a number of genes involved in the response to DNA damage (SOS response), including recA and lexA. Binds to the 16 bp palindromic sequence 5'-CTGTATATATATACAG-3'. In the presence of single-stranded DNA, RecA interacts with LexA causing an autocatalytic cleavage which disrupts the DNA-binding part of LexA, leading to derepression of the SOS regulon and eventually DNA repair.</text>
</comment>
<comment type="catalytic activity">
    <reaction evidence="1">
        <text>Hydrolysis of Ala-|-Gly bond in repressor LexA.</text>
        <dbReference type="EC" id="3.4.21.88"/>
    </reaction>
</comment>
<comment type="subunit">
    <text evidence="1">Homodimer.</text>
</comment>
<comment type="similarity">
    <text evidence="1">Belongs to the peptidase S24 family.</text>
</comment>
<accession>A9MGP6</accession>
<protein>
    <recommendedName>
        <fullName evidence="1">LexA repressor</fullName>
        <ecNumber evidence="1">3.4.21.88</ecNumber>
    </recommendedName>
</protein>
<feature type="chain" id="PRO_1000074062" description="LexA repressor">
    <location>
        <begin position="1"/>
        <end position="202"/>
    </location>
</feature>
<feature type="DNA-binding region" description="H-T-H motif" evidence="1">
    <location>
        <begin position="28"/>
        <end position="48"/>
    </location>
</feature>
<feature type="active site" description="For autocatalytic cleavage activity" evidence="1">
    <location>
        <position position="119"/>
    </location>
</feature>
<feature type="active site" description="For autocatalytic cleavage activity" evidence="1">
    <location>
        <position position="156"/>
    </location>
</feature>
<feature type="site" description="Cleavage; by autolysis" evidence="1">
    <location>
        <begin position="84"/>
        <end position="85"/>
    </location>
</feature>
<dbReference type="EC" id="3.4.21.88" evidence="1"/>
<dbReference type="EMBL" id="CP000880">
    <property type="protein sequence ID" value="ABX23270.1"/>
    <property type="molecule type" value="Genomic_DNA"/>
</dbReference>
<dbReference type="SMR" id="A9MGP6"/>
<dbReference type="STRING" id="41514.SARI_03441"/>
<dbReference type="MEROPS" id="S24.001"/>
<dbReference type="KEGG" id="ses:SARI_03441"/>
<dbReference type="HOGENOM" id="CLU_066192_45_3_6"/>
<dbReference type="Proteomes" id="UP000002084">
    <property type="component" value="Chromosome"/>
</dbReference>
<dbReference type="GO" id="GO:0003677">
    <property type="term" value="F:DNA binding"/>
    <property type="evidence" value="ECO:0007669"/>
    <property type="project" value="UniProtKB-UniRule"/>
</dbReference>
<dbReference type="GO" id="GO:0004252">
    <property type="term" value="F:serine-type endopeptidase activity"/>
    <property type="evidence" value="ECO:0007669"/>
    <property type="project" value="UniProtKB-UniRule"/>
</dbReference>
<dbReference type="GO" id="GO:0006281">
    <property type="term" value="P:DNA repair"/>
    <property type="evidence" value="ECO:0007669"/>
    <property type="project" value="UniProtKB-UniRule"/>
</dbReference>
<dbReference type="GO" id="GO:0006260">
    <property type="term" value="P:DNA replication"/>
    <property type="evidence" value="ECO:0007669"/>
    <property type="project" value="UniProtKB-UniRule"/>
</dbReference>
<dbReference type="GO" id="GO:0045892">
    <property type="term" value="P:negative regulation of DNA-templated transcription"/>
    <property type="evidence" value="ECO:0007669"/>
    <property type="project" value="UniProtKB-UniRule"/>
</dbReference>
<dbReference type="GO" id="GO:0006508">
    <property type="term" value="P:proteolysis"/>
    <property type="evidence" value="ECO:0007669"/>
    <property type="project" value="InterPro"/>
</dbReference>
<dbReference type="GO" id="GO:0009432">
    <property type="term" value="P:SOS response"/>
    <property type="evidence" value="ECO:0007669"/>
    <property type="project" value="UniProtKB-UniRule"/>
</dbReference>
<dbReference type="CDD" id="cd06529">
    <property type="entry name" value="S24_LexA-like"/>
    <property type="match status" value="1"/>
</dbReference>
<dbReference type="FunFam" id="1.10.10.10:FF:000009">
    <property type="entry name" value="LexA repressor"/>
    <property type="match status" value="1"/>
</dbReference>
<dbReference type="FunFam" id="2.10.109.10:FF:000001">
    <property type="entry name" value="LexA repressor"/>
    <property type="match status" value="1"/>
</dbReference>
<dbReference type="Gene3D" id="2.10.109.10">
    <property type="entry name" value="Umud Fragment, subunit A"/>
    <property type="match status" value="1"/>
</dbReference>
<dbReference type="Gene3D" id="1.10.10.10">
    <property type="entry name" value="Winged helix-like DNA-binding domain superfamily/Winged helix DNA-binding domain"/>
    <property type="match status" value="1"/>
</dbReference>
<dbReference type="HAMAP" id="MF_00015">
    <property type="entry name" value="LexA"/>
    <property type="match status" value="1"/>
</dbReference>
<dbReference type="InterPro" id="IPR006200">
    <property type="entry name" value="LexA"/>
</dbReference>
<dbReference type="InterPro" id="IPR039418">
    <property type="entry name" value="LexA-like"/>
</dbReference>
<dbReference type="InterPro" id="IPR036286">
    <property type="entry name" value="LexA/Signal_pep-like_sf"/>
</dbReference>
<dbReference type="InterPro" id="IPR006199">
    <property type="entry name" value="LexA_DNA-bd_dom"/>
</dbReference>
<dbReference type="InterPro" id="IPR050077">
    <property type="entry name" value="LexA_repressor"/>
</dbReference>
<dbReference type="InterPro" id="IPR006197">
    <property type="entry name" value="Peptidase_S24_LexA"/>
</dbReference>
<dbReference type="InterPro" id="IPR015927">
    <property type="entry name" value="Peptidase_S24_S26A/B/C"/>
</dbReference>
<dbReference type="InterPro" id="IPR036388">
    <property type="entry name" value="WH-like_DNA-bd_sf"/>
</dbReference>
<dbReference type="InterPro" id="IPR036390">
    <property type="entry name" value="WH_DNA-bd_sf"/>
</dbReference>
<dbReference type="NCBIfam" id="TIGR00498">
    <property type="entry name" value="lexA"/>
    <property type="match status" value="1"/>
</dbReference>
<dbReference type="PANTHER" id="PTHR33516">
    <property type="entry name" value="LEXA REPRESSOR"/>
    <property type="match status" value="1"/>
</dbReference>
<dbReference type="PANTHER" id="PTHR33516:SF2">
    <property type="entry name" value="LEXA REPRESSOR-RELATED"/>
    <property type="match status" value="1"/>
</dbReference>
<dbReference type="Pfam" id="PF01726">
    <property type="entry name" value="LexA_DNA_bind"/>
    <property type="match status" value="1"/>
</dbReference>
<dbReference type="Pfam" id="PF00717">
    <property type="entry name" value="Peptidase_S24"/>
    <property type="match status" value="1"/>
</dbReference>
<dbReference type="PRINTS" id="PR00726">
    <property type="entry name" value="LEXASERPTASE"/>
</dbReference>
<dbReference type="SUPFAM" id="SSF51306">
    <property type="entry name" value="LexA/Signal peptidase"/>
    <property type="match status" value="1"/>
</dbReference>
<dbReference type="SUPFAM" id="SSF46785">
    <property type="entry name" value="Winged helix' DNA-binding domain"/>
    <property type="match status" value="1"/>
</dbReference>
<evidence type="ECO:0000255" key="1">
    <source>
        <dbReference type="HAMAP-Rule" id="MF_00015"/>
    </source>
</evidence>
<reference key="1">
    <citation type="submission" date="2007-11" db="EMBL/GenBank/DDBJ databases">
        <authorList>
            <consortium name="The Salmonella enterica serovar Arizonae Genome Sequencing Project"/>
            <person name="McClelland M."/>
            <person name="Sanderson E.K."/>
            <person name="Porwollik S."/>
            <person name="Spieth J."/>
            <person name="Clifton W.S."/>
            <person name="Fulton R."/>
            <person name="Chunyan W."/>
            <person name="Wollam A."/>
            <person name="Shah N."/>
            <person name="Pepin K."/>
            <person name="Bhonagiri V."/>
            <person name="Nash W."/>
            <person name="Johnson M."/>
            <person name="Thiruvilangam P."/>
            <person name="Wilson R."/>
        </authorList>
    </citation>
    <scope>NUCLEOTIDE SEQUENCE [LARGE SCALE GENOMIC DNA]</scope>
    <source>
        <strain>ATCC BAA-731 / CDC346-86 / RSK2980</strain>
    </source>
</reference>
<organism>
    <name type="scientific">Salmonella arizonae (strain ATCC BAA-731 / CDC346-86 / RSK2980)</name>
    <dbReference type="NCBI Taxonomy" id="41514"/>
    <lineage>
        <taxon>Bacteria</taxon>
        <taxon>Pseudomonadati</taxon>
        <taxon>Pseudomonadota</taxon>
        <taxon>Gammaproteobacteria</taxon>
        <taxon>Enterobacterales</taxon>
        <taxon>Enterobacteriaceae</taxon>
        <taxon>Salmonella</taxon>
    </lineage>
</organism>
<name>LEXA_SALAR</name>
<keyword id="KW-0068">Autocatalytic cleavage</keyword>
<keyword id="KW-0227">DNA damage</keyword>
<keyword id="KW-0234">DNA repair</keyword>
<keyword id="KW-0235">DNA replication</keyword>
<keyword id="KW-0238">DNA-binding</keyword>
<keyword id="KW-0378">Hydrolase</keyword>
<keyword id="KW-1185">Reference proteome</keyword>
<keyword id="KW-0678">Repressor</keyword>
<keyword id="KW-0742">SOS response</keyword>
<keyword id="KW-0804">Transcription</keyword>
<keyword id="KW-0805">Transcription regulation</keyword>